<proteinExistence type="evidence at protein level"/>
<feature type="chain" id="PRO_0000124782" description="Nuclear pore complex protein Nup93">
    <location>
        <begin position="1"/>
        <end position="819"/>
    </location>
</feature>
<feature type="modified residue" description="Phosphothreonine" evidence="14">
    <location>
        <position position="49"/>
    </location>
</feature>
<feature type="modified residue" description="Phosphoserine" evidence="11 12 14">
    <location>
        <position position="52"/>
    </location>
</feature>
<feature type="modified residue" description="Phosphoserine" evidence="14">
    <location>
        <position position="66"/>
    </location>
</feature>
<feature type="modified residue" description="Phosphoserine" evidence="11 12 13 14">
    <location>
        <position position="72"/>
    </location>
</feature>
<feature type="modified residue" description="Phosphoserine" evidence="13 14">
    <location>
        <position position="75"/>
    </location>
</feature>
<feature type="modified residue" description="Phosphoserine" evidence="14 15">
    <location>
        <position position="80"/>
    </location>
</feature>
<feature type="modified residue" description="Phosphoserine" evidence="14">
    <location>
        <position position="430"/>
    </location>
</feature>
<feature type="modified residue" description="Phosphoserine" evidence="14">
    <location>
        <position position="767"/>
    </location>
</feature>
<feature type="splice variant" id="VSP_043117" description="In isoform 2." evidence="9">
    <location>
        <begin position="1"/>
        <end position="123"/>
    </location>
</feature>
<feature type="sequence variant" id="VAR_076473" description="In NPHS12; doesnt affect nuclear envelope localization; impairs nuclear pore complex assembly; doesn't abrogate interaction with NUP205; doesn't affect SMAD4 interaction; doesn't affect IPO7 interaction; impairs SMAD4 protein import into nucleus; impairs SMAD4 protein signal transduction; dbSNP:rs145146218." evidence="6">
    <original>R</original>
    <variation>W</variation>
    <location>
        <position position="388"/>
    </location>
</feature>
<feature type="sequence variant" id="VAR_028160" description="In dbSNP:rs17853288." evidence="4">
    <original>S</original>
    <variation>R</variation>
    <location>
        <position position="509"/>
    </location>
</feature>
<feature type="sequence variant" id="VAR_076474" description="In NPHS12; doesnt affect nuclear envelope localization; doesn't affect nuclear pore complex assembly; doesn't abrogate interaction with NUP205; abrogates SMAD4 interaction; abrogates IPO7 interaction; impairs SMAD4 protein import into nucleus; impairs SMAD4 protein signal transduction; dbSNP:rs145473779." evidence="6">
    <original>G</original>
    <variation>V</variation>
    <location>
        <position position="591"/>
    </location>
</feature>
<feature type="sequence variant" id="VAR_076475" description="In NPHS12; doesnt affect nuclear envelope localization; doesn't affect nuclear pore complex assembly; doesn't abrogate interaction with NUP205; abrogates SMAD4 interaction; abrogates IPO7 interaction; impairs SMAD4 protein import; impairs SMAD4 protein signal transduction into nucleus;; dbSNP:rs757674160." evidence="6">
    <original>Y</original>
    <variation>C</variation>
    <location>
        <position position="629"/>
    </location>
</feature>
<feature type="helix" evidence="16">
    <location>
        <begin position="180"/>
        <end position="197"/>
    </location>
</feature>
<feature type="helix" evidence="16">
    <location>
        <begin position="205"/>
        <end position="210"/>
    </location>
</feature>
<feature type="helix" evidence="16">
    <location>
        <begin position="211"/>
        <end position="215"/>
    </location>
</feature>
<feature type="helix" evidence="16">
    <location>
        <begin position="218"/>
        <end position="230"/>
    </location>
</feature>
<feature type="helix" evidence="16">
    <location>
        <begin position="241"/>
        <end position="246"/>
    </location>
</feature>
<feature type="helix" evidence="16">
    <location>
        <begin position="248"/>
        <end position="275"/>
    </location>
</feature>
<feature type="turn" evidence="16">
    <location>
        <begin position="278"/>
        <end position="280"/>
    </location>
</feature>
<feature type="helix" evidence="16">
    <location>
        <begin position="289"/>
        <end position="300"/>
    </location>
</feature>
<feature type="helix" evidence="16">
    <location>
        <begin position="318"/>
        <end position="327"/>
    </location>
</feature>
<feature type="helix" evidence="16">
    <location>
        <begin position="331"/>
        <end position="339"/>
    </location>
</feature>
<feature type="helix" evidence="16">
    <location>
        <begin position="342"/>
        <end position="345"/>
    </location>
</feature>
<feature type="helix" evidence="16">
    <location>
        <begin position="348"/>
        <end position="357"/>
    </location>
</feature>
<feature type="helix" evidence="17">
    <location>
        <begin position="359"/>
        <end position="361"/>
    </location>
</feature>
<feature type="helix" evidence="16">
    <location>
        <begin position="365"/>
        <end position="377"/>
    </location>
</feature>
<feature type="turn" evidence="16">
    <location>
        <begin position="378"/>
        <end position="381"/>
    </location>
</feature>
<feature type="helix" evidence="16">
    <location>
        <begin position="385"/>
        <end position="394"/>
    </location>
</feature>
<feature type="turn" evidence="16">
    <location>
        <begin position="404"/>
        <end position="406"/>
    </location>
</feature>
<feature type="helix" evidence="16">
    <location>
        <begin position="410"/>
        <end position="420"/>
    </location>
</feature>
<feature type="strand" evidence="16">
    <location>
        <begin position="427"/>
        <end position="429"/>
    </location>
</feature>
<feature type="helix" evidence="16">
    <location>
        <begin position="437"/>
        <end position="445"/>
    </location>
</feature>
<feature type="turn" evidence="16">
    <location>
        <begin position="446"/>
        <end position="448"/>
    </location>
</feature>
<feature type="helix" evidence="16">
    <location>
        <begin position="449"/>
        <end position="452"/>
    </location>
</feature>
<feature type="turn" evidence="16">
    <location>
        <begin position="455"/>
        <end position="457"/>
    </location>
</feature>
<feature type="helix" evidence="16">
    <location>
        <begin position="459"/>
        <end position="468"/>
    </location>
</feature>
<feature type="helix" evidence="16">
    <location>
        <begin position="472"/>
        <end position="481"/>
    </location>
</feature>
<feature type="helix" evidence="16">
    <location>
        <begin position="483"/>
        <end position="485"/>
    </location>
</feature>
<feature type="helix" evidence="16">
    <location>
        <begin position="486"/>
        <end position="498"/>
    </location>
</feature>
<feature type="strand" evidence="16">
    <location>
        <begin position="506"/>
        <end position="510"/>
    </location>
</feature>
<feature type="strand" evidence="16">
    <location>
        <begin position="512"/>
        <end position="514"/>
    </location>
</feature>
<feature type="helix" evidence="16">
    <location>
        <begin position="528"/>
        <end position="536"/>
    </location>
</feature>
<feature type="turn" evidence="16">
    <location>
        <begin position="537"/>
        <end position="542"/>
    </location>
</feature>
<feature type="helix" evidence="16">
    <location>
        <begin position="544"/>
        <end position="551"/>
    </location>
</feature>
<feature type="helix" evidence="16">
    <location>
        <begin position="552"/>
        <end position="554"/>
    </location>
</feature>
<feature type="helix" evidence="16">
    <location>
        <begin position="565"/>
        <end position="577"/>
    </location>
</feature>
<feature type="helix" evidence="16">
    <location>
        <begin position="580"/>
        <end position="584"/>
    </location>
</feature>
<feature type="helix" evidence="16">
    <location>
        <begin position="597"/>
        <end position="601"/>
    </location>
</feature>
<feature type="helix" evidence="16">
    <location>
        <begin position="606"/>
        <end position="618"/>
    </location>
</feature>
<feature type="helix" evidence="16">
    <location>
        <begin position="622"/>
        <end position="631"/>
    </location>
</feature>
<feature type="helix" evidence="16">
    <location>
        <begin position="635"/>
        <end position="646"/>
    </location>
</feature>
<feature type="helix" evidence="16">
    <location>
        <begin position="647"/>
        <end position="649"/>
    </location>
</feature>
<feature type="strand" evidence="17">
    <location>
        <begin position="650"/>
        <end position="652"/>
    </location>
</feature>
<feature type="helix" evidence="16">
    <location>
        <begin position="659"/>
        <end position="677"/>
    </location>
</feature>
<feature type="helix" evidence="16">
    <location>
        <begin position="683"/>
        <end position="703"/>
    </location>
</feature>
<feature type="helix" evidence="16">
    <location>
        <begin position="707"/>
        <end position="717"/>
    </location>
</feature>
<feature type="helix" evidence="16">
    <location>
        <begin position="724"/>
        <end position="726"/>
    </location>
</feature>
<feature type="helix" evidence="16">
    <location>
        <begin position="727"/>
        <end position="734"/>
    </location>
</feature>
<feature type="helix" evidence="16">
    <location>
        <begin position="739"/>
        <end position="742"/>
    </location>
</feature>
<feature type="helix" evidence="16">
    <location>
        <begin position="745"/>
        <end position="761"/>
    </location>
</feature>
<feature type="helix" evidence="16">
    <location>
        <begin position="781"/>
        <end position="797"/>
    </location>
</feature>
<feature type="helix" evidence="16">
    <location>
        <begin position="804"/>
        <end position="816"/>
    </location>
</feature>
<comment type="function">
    <text evidence="3 5 6 8">Plays a role in the nuclear pore complex (NPC) assembly and/or maintenance (PubMed:9348540). May anchor nucleoporins, but not NUP153 and TPR, to the NPC. During renal development, regulates podocyte migration and proliferation through SMAD4 signaling (PubMed:26878725).</text>
</comment>
<comment type="subunit">
    <text evidence="2 3 5 6 8">Part of the nuclear pore complex (NPC) (PubMed:15229283, PubMed:15703211, PubMed:9348540). Component of the p62 complex, a complex composed of NUP62 and NUP54 (PubMed:9348540). Forms a complex with NUP35, NUP155, NUP205 and lamin B; the interaction with NUP35 is direct (PubMed:15703211). Does not interact with TPR (PubMed:12802065, PubMed:15229283). Interacts with SMAD4 and IPO7; translocates SMAD4 to the nucleus through the NPC upon BMP7 stimulation resulting in activation of SMAD4 signaling (PubMed:26878725).</text>
</comment>
<comment type="subunit">
    <text evidence="7">(Microbial infection) Interacts with SARS-CoV translation inhibitor nsp1; this interaction may disrupt nuclear pore function.</text>
</comment>
<comment type="interaction">
    <interactant intactId="EBI-1042703">
        <id>Q8N1F7</id>
    </interactant>
    <interactant intactId="EBI-740938">
        <id>O43299</id>
        <label>AP5Z1</label>
    </interactant>
    <organismsDiffer>false</organismsDiffer>
    <experiments>3</experiments>
</comment>
<comment type="interaction">
    <interactant intactId="EBI-1042703">
        <id>Q8N1F7</id>
    </interactant>
    <interactant intactId="EBI-2350461">
        <id>Q15777</id>
        <label>MPPED2</label>
    </interactant>
    <organismsDiffer>false</organismsDiffer>
    <experiments>3</experiments>
</comment>
<comment type="interaction">
    <interactant intactId="EBI-1042703">
        <id>Q8N1F7</id>
    </interactant>
    <interactant intactId="EBI-6447201">
        <id>Q14982</id>
        <label>OPCML</label>
    </interactant>
    <organismsDiffer>false</organismsDiffer>
    <experiments>3</experiments>
</comment>
<comment type="interaction">
    <interactant intactId="EBI-1042703">
        <id>Q8N1F7</id>
    </interactant>
    <interactant intactId="EBI-12089905">
        <id>O60733</id>
        <label>PLA2G6</label>
    </interactant>
    <organismsDiffer>false</organismsDiffer>
    <experiments>3</experiments>
</comment>
<comment type="interaction">
    <interactant intactId="EBI-1042703">
        <id>Q8N1F7</id>
    </interactant>
    <interactant intactId="EBI-8644968">
        <id>Q9NV29</id>
        <label>TMEM100</label>
    </interactant>
    <organismsDiffer>false</organismsDiffer>
    <experiments>3</experiments>
</comment>
<comment type="subcellular location">
    <subcellularLocation>
        <location evidence="1">Nucleus membrane</location>
        <topology evidence="1">Peripheral membrane protein</topology>
    </subcellularLocation>
    <subcellularLocation>
        <location evidence="2 3 8">Nucleus</location>
        <location evidence="2 3 8">Nuclear pore complex</location>
    </subcellularLocation>
    <subcellularLocation>
        <location evidence="6 8">Nucleus envelope</location>
    </subcellularLocation>
    <text evidence="8">Localizes at the nuclear basket and at or near the nuclear entry to the gated channel of the pore.</text>
</comment>
<comment type="alternative products">
    <event type="alternative splicing"/>
    <isoform>
        <id>Q8N1F7-1</id>
        <name>1</name>
        <sequence type="displayed"/>
    </isoform>
    <isoform>
        <id>Q8N1F7-2</id>
        <name>2</name>
        <sequence type="described" ref="VSP_043117"/>
    </isoform>
</comment>
<comment type="disease" evidence="6">
    <disease id="DI-04699">
        <name>Nephrotic syndrome 12</name>
        <acronym>NPHS12</acronym>
        <description>A form of nephrotic syndrome, a renal disease clinically characterized by severe proteinuria, resulting in complications such as hypoalbuminemia, hyperlipidemia and edema. Kidney biopsies show non-specific histologic changes such as focal segmental glomerulosclerosis and diffuse mesangial proliferation. Some affected individuals have an inherited steroid-resistant form and progress to end-stage renal failure. NPHS12 inheritance is autosomal recessive.</description>
        <dbReference type="MIM" id="616892"/>
    </disease>
    <text>The disease is caused by variants affecting the gene represented in this entry.</text>
</comment>
<comment type="similarity">
    <text evidence="10">Belongs to the nucleoporin interacting component (NIC) family.</text>
</comment>
<comment type="sequence caution" evidence="10">
    <conflict type="erroneous initiation">
        <sequence resource="EMBL-CDS" id="BAA07680"/>
    </conflict>
    <text>Extended N-terminus.</text>
</comment>
<gene>
    <name type="primary">NUP93</name>
    <name type="synonym">KIAA0095</name>
</gene>
<reference key="1">
    <citation type="journal article" date="1995" name="DNA Res.">
        <title>Prediction of the coding sequences of unidentified human genes. III. The coding sequences of 40 new genes (KIAA0081-KIAA0120) deduced by analysis of cDNA clones from human cell line KG-1.</title>
        <authorList>
            <person name="Nagase T."/>
            <person name="Miyajima N."/>
            <person name="Tanaka A."/>
            <person name="Sazuka T."/>
            <person name="Seki N."/>
            <person name="Sato S."/>
            <person name="Tabata S."/>
            <person name="Ishikawa K."/>
            <person name="Kawarabayasi Y."/>
            <person name="Kotani H."/>
            <person name="Nomura N."/>
        </authorList>
    </citation>
    <scope>NUCLEOTIDE SEQUENCE [LARGE SCALE MRNA] (ISOFORM 1)</scope>
    <source>
        <tissue>Bone marrow</tissue>
    </source>
</reference>
<reference key="2">
    <citation type="journal article" date="2004" name="Nat. Genet.">
        <title>Complete sequencing and characterization of 21,243 full-length human cDNAs.</title>
        <authorList>
            <person name="Ota T."/>
            <person name="Suzuki Y."/>
            <person name="Nishikawa T."/>
            <person name="Otsuki T."/>
            <person name="Sugiyama T."/>
            <person name="Irie R."/>
            <person name="Wakamatsu A."/>
            <person name="Hayashi K."/>
            <person name="Sato H."/>
            <person name="Nagai K."/>
            <person name="Kimura K."/>
            <person name="Makita H."/>
            <person name="Sekine M."/>
            <person name="Obayashi M."/>
            <person name="Nishi T."/>
            <person name="Shibahara T."/>
            <person name="Tanaka T."/>
            <person name="Ishii S."/>
            <person name="Yamamoto J."/>
            <person name="Saito K."/>
            <person name="Kawai Y."/>
            <person name="Isono Y."/>
            <person name="Nakamura Y."/>
            <person name="Nagahari K."/>
            <person name="Murakami K."/>
            <person name="Yasuda T."/>
            <person name="Iwayanagi T."/>
            <person name="Wagatsuma M."/>
            <person name="Shiratori A."/>
            <person name="Sudo H."/>
            <person name="Hosoiri T."/>
            <person name="Kaku Y."/>
            <person name="Kodaira H."/>
            <person name="Kondo H."/>
            <person name="Sugawara M."/>
            <person name="Takahashi M."/>
            <person name="Kanda K."/>
            <person name="Yokoi T."/>
            <person name="Furuya T."/>
            <person name="Kikkawa E."/>
            <person name="Omura Y."/>
            <person name="Abe K."/>
            <person name="Kamihara K."/>
            <person name="Katsuta N."/>
            <person name="Sato K."/>
            <person name="Tanikawa M."/>
            <person name="Yamazaki M."/>
            <person name="Ninomiya K."/>
            <person name="Ishibashi T."/>
            <person name="Yamashita H."/>
            <person name="Murakawa K."/>
            <person name="Fujimori K."/>
            <person name="Tanai H."/>
            <person name="Kimata M."/>
            <person name="Watanabe M."/>
            <person name="Hiraoka S."/>
            <person name="Chiba Y."/>
            <person name="Ishida S."/>
            <person name="Ono Y."/>
            <person name="Takiguchi S."/>
            <person name="Watanabe S."/>
            <person name="Yosida M."/>
            <person name="Hotuta T."/>
            <person name="Kusano J."/>
            <person name="Kanehori K."/>
            <person name="Takahashi-Fujii A."/>
            <person name="Hara H."/>
            <person name="Tanase T.-O."/>
            <person name="Nomura Y."/>
            <person name="Togiya S."/>
            <person name="Komai F."/>
            <person name="Hara R."/>
            <person name="Takeuchi K."/>
            <person name="Arita M."/>
            <person name="Imose N."/>
            <person name="Musashino K."/>
            <person name="Yuuki H."/>
            <person name="Oshima A."/>
            <person name="Sasaki N."/>
            <person name="Aotsuka S."/>
            <person name="Yoshikawa Y."/>
            <person name="Matsunawa H."/>
            <person name="Ichihara T."/>
            <person name="Shiohata N."/>
            <person name="Sano S."/>
            <person name="Moriya S."/>
            <person name="Momiyama H."/>
            <person name="Satoh N."/>
            <person name="Takami S."/>
            <person name="Terashima Y."/>
            <person name="Suzuki O."/>
            <person name="Nakagawa S."/>
            <person name="Senoh A."/>
            <person name="Mizoguchi H."/>
            <person name="Goto Y."/>
            <person name="Shimizu F."/>
            <person name="Wakebe H."/>
            <person name="Hishigaki H."/>
            <person name="Watanabe T."/>
            <person name="Sugiyama A."/>
            <person name="Takemoto M."/>
            <person name="Kawakami B."/>
            <person name="Yamazaki M."/>
            <person name="Watanabe K."/>
            <person name="Kumagai A."/>
            <person name="Itakura S."/>
            <person name="Fukuzumi Y."/>
            <person name="Fujimori Y."/>
            <person name="Komiyama M."/>
            <person name="Tashiro H."/>
            <person name="Tanigami A."/>
            <person name="Fujiwara T."/>
            <person name="Ono T."/>
            <person name="Yamada K."/>
            <person name="Fujii Y."/>
            <person name="Ozaki K."/>
            <person name="Hirao M."/>
            <person name="Ohmori Y."/>
            <person name="Kawabata A."/>
            <person name="Hikiji T."/>
            <person name="Kobatake N."/>
            <person name="Inagaki H."/>
            <person name="Ikema Y."/>
            <person name="Okamoto S."/>
            <person name="Okitani R."/>
            <person name="Kawakami T."/>
            <person name="Noguchi S."/>
            <person name="Itoh T."/>
            <person name="Shigeta K."/>
            <person name="Senba T."/>
            <person name="Matsumura K."/>
            <person name="Nakajima Y."/>
            <person name="Mizuno T."/>
            <person name="Morinaga M."/>
            <person name="Sasaki M."/>
            <person name="Togashi T."/>
            <person name="Oyama M."/>
            <person name="Hata H."/>
            <person name="Watanabe M."/>
            <person name="Komatsu T."/>
            <person name="Mizushima-Sugano J."/>
            <person name="Satoh T."/>
            <person name="Shirai Y."/>
            <person name="Takahashi Y."/>
            <person name="Nakagawa K."/>
            <person name="Okumura K."/>
            <person name="Nagase T."/>
            <person name="Nomura N."/>
            <person name="Kikuchi H."/>
            <person name="Masuho Y."/>
            <person name="Yamashita R."/>
            <person name="Nakai K."/>
            <person name="Yada T."/>
            <person name="Nakamura Y."/>
            <person name="Ohara O."/>
            <person name="Isogai T."/>
            <person name="Sugano S."/>
        </authorList>
    </citation>
    <scope>NUCLEOTIDE SEQUENCE [LARGE SCALE MRNA] (ISOFORM 2)</scope>
    <source>
        <tissue>Amygdala</tissue>
        <tissue>Brain</tissue>
    </source>
</reference>
<reference key="3">
    <citation type="journal article" date="2004" name="Nature">
        <title>The sequence and analysis of duplication-rich human chromosome 16.</title>
        <authorList>
            <person name="Martin J."/>
            <person name="Han C."/>
            <person name="Gordon L.A."/>
            <person name="Terry A."/>
            <person name="Prabhakar S."/>
            <person name="She X."/>
            <person name="Xie G."/>
            <person name="Hellsten U."/>
            <person name="Chan Y.M."/>
            <person name="Altherr M."/>
            <person name="Couronne O."/>
            <person name="Aerts A."/>
            <person name="Bajorek E."/>
            <person name="Black S."/>
            <person name="Blumer H."/>
            <person name="Branscomb E."/>
            <person name="Brown N.C."/>
            <person name="Bruno W.J."/>
            <person name="Buckingham J.M."/>
            <person name="Callen D.F."/>
            <person name="Campbell C.S."/>
            <person name="Campbell M.L."/>
            <person name="Campbell E.W."/>
            <person name="Caoile C."/>
            <person name="Challacombe J.F."/>
            <person name="Chasteen L.A."/>
            <person name="Chertkov O."/>
            <person name="Chi H.C."/>
            <person name="Christensen M."/>
            <person name="Clark L.M."/>
            <person name="Cohn J.D."/>
            <person name="Denys M."/>
            <person name="Detter J.C."/>
            <person name="Dickson M."/>
            <person name="Dimitrijevic-Bussod M."/>
            <person name="Escobar J."/>
            <person name="Fawcett J.J."/>
            <person name="Flowers D."/>
            <person name="Fotopulos D."/>
            <person name="Glavina T."/>
            <person name="Gomez M."/>
            <person name="Gonzales E."/>
            <person name="Goodstein D."/>
            <person name="Goodwin L.A."/>
            <person name="Grady D.L."/>
            <person name="Grigoriev I."/>
            <person name="Groza M."/>
            <person name="Hammon N."/>
            <person name="Hawkins T."/>
            <person name="Haydu L."/>
            <person name="Hildebrand C.E."/>
            <person name="Huang W."/>
            <person name="Israni S."/>
            <person name="Jett J."/>
            <person name="Jewett P.B."/>
            <person name="Kadner K."/>
            <person name="Kimball H."/>
            <person name="Kobayashi A."/>
            <person name="Krawczyk M.-C."/>
            <person name="Leyba T."/>
            <person name="Longmire J.L."/>
            <person name="Lopez F."/>
            <person name="Lou Y."/>
            <person name="Lowry S."/>
            <person name="Ludeman T."/>
            <person name="Manohar C.F."/>
            <person name="Mark G.A."/>
            <person name="McMurray K.L."/>
            <person name="Meincke L.J."/>
            <person name="Morgan J."/>
            <person name="Moyzis R.K."/>
            <person name="Mundt M.O."/>
            <person name="Munk A.C."/>
            <person name="Nandkeshwar R.D."/>
            <person name="Pitluck S."/>
            <person name="Pollard M."/>
            <person name="Predki P."/>
            <person name="Parson-Quintana B."/>
            <person name="Ramirez L."/>
            <person name="Rash S."/>
            <person name="Retterer J."/>
            <person name="Ricke D.O."/>
            <person name="Robinson D.L."/>
            <person name="Rodriguez A."/>
            <person name="Salamov A."/>
            <person name="Saunders E.H."/>
            <person name="Scott D."/>
            <person name="Shough T."/>
            <person name="Stallings R.L."/>
            <person name="Stalvey M."/>
            <person name="Sutherland R.D."/>
            <person name="Tapia R."/>
            <person name="Tesmer J.G."/>
            <person name="Thayer N."/>
            <person name="Thompson L.S."/>
            <person name="Tice H."/>
            <person name="Torney D.C."/>
            <person name="Tran-Gyamfi M."/>
            <person name="Tsai M."/>
            <person name="Ulanovsky L.E."/>
            <person name="Ustaszewska A."/>
            <person name="Vo N."/>
            <person name="White P.S."/>
            <person name="Williams A.L."/>
            <person name="Wills P.L."/>
            <person name="Wu J.-R."/>
            <person name="Wu K."/>
            <person name="Yang J."/>
            <person name="DeJong P."/>
            <person name="Bruce D."/>
            <person name="Doggett N.A."/>
            <person name="Deaven L."/>
            <person name="Schmutz J."/>
            <person name="Grimwood J."/>
            <person name="Richardson P."/>
            <person name="Rokhsar D.S."/>
            <person name="Eichler E.E."/>
            <person name="Gilna P."/>
            <person name="Lucas S.M."/>
            <person name="Myers R.M."/>
            <person name="Rubin E.M."/>
            <person name="Pennacchio L.A."/>
        </authorList>
    </citation>
    <scope>NUCLEOTIDE SEQUENCE [LARGE SCALE GENOMIC DNA]</scope>
</reference>
<reference key="4">
    <citation type="journal article" date="2004" name="Genome Res.">
        <title>The status, quality, and expansion of the NIH full-length cDNA project: the Mammalian Gene Collection (MGC).</title>
        <authorList>
            <consortium name="The MGC Project Team"/>
        </authorList>
    </citation>
    <scope>NUCLEOTIDE SEQUENCE [LARGE SCALE MRNA] (ISOFORM 1)</scope>
    <scope>VARIANT ARG-509</scope>
    <source>
        <tissue>Skin</tissue>
    </source>
</reference>
<reference key="5">
    <citation type="journal article" date="1997" name="Mol. Biol. Cell">
        <title>Nup93, a vertebrate homologue of yeast Nic96p, forms a complex with a novel 205-kDa protein and is required for correct nuclear pore assembly.</title>
        <authorList>
            <person name="Grandi P."/>
            <person name="Dang T."/>
            <person name="Pane N."/>
            <person name="Shevchenko A."/>
            <person name="Mann M."/>
            <person name="Forbes D."/>
            <person name="Hurt E."/>
        </authorList>
    </citation>
    <scope>FUNCTION</scope>
    <scope>IDENTIFICATION IN THE NUCLEAR PORE COMPLEX</scope>
    <scope>INTERACTION WITH P62 COMPLEX</scope>
    <scope>SUBCELLULAR LOCATION</scope>
</reference>
<reference key="6">
    <citation type="journal article" date="2003" name="Mol. Biol. Cell">
        <title>Direct interaction with nup153 mediates binding of Tpr to the periphery of the nuclear pore complex.</title>
        <authorList>
            <person name="Hase M.E."/>
            <person name="Cordes V.C."/>
        </authorList>
    </citation>
    <scope>LACK OF INTERACTION WITH TPR</scope>
    <scope>SUBCELLULAR LOCATION</scope>
</reference>
<reference key="7">
    <citation type="journal article" date="2004" name="Mol. Biol. Cell">
        <title>Nucleoporins as components of the nuclear pore complex core structure and Tpr as the architectural element of the nuclear basket.</title>
        <authorList>
            <person name="Krull S."/>
            <person name="Thyberg J."/>
            <person name="Bjorkroth B."/>
            <person name="Rackwitz H.R."/>
            <person name="Cordes V.C."/>
        </authorList>
    </citation>
    <scope>FUNCTION</scope>
    <scope>IDENTIFICATION IN THE NUCLEAR PORE COMPLEX</scope>
    <scope>SUBCELLULAR LOCATION</scope>
</reference>
<reference key="8">
    <citation type="journal article" date="2005" name="Mol. Biol. Cell">
        <title>Vertebrate Nup53 interacts with the nuclear lamina and is required for the assembly of a Nup93-containing complex.</title>
        <authorList>
            <person name="Hawryluk-Gara L.A."/>
            <person name="Shibuya E.K."/>
            <person name="Wozniak R.W."/>
        </authorList>
    </citation>
    <scope>FUNCTION</scope>
    <scope>IDENTIFICATION IN THE NUCLEAR PORE COMPLEX</scope>
    <scope>INTERACTION WITH NUP35</scope>
    <scope>IDENTIFICATION IN A COMPLEX WITH NUP155; NUP205 AND LAMIN B</scope>
</reference>
<reference key="9">
    <citation type="journal article" date="2008" name="Mol. Cell">
        <title>Kinase-selective enrichment enables quantitative phosphoproteomics of the kinome across the cell cycle.</title>
        <authorList>
            <person name="Daub H."/>
            <person name="Olsen J.V."/>
            <person name="Bairlein M."/>
            <person name="Gnad F."/>
            <person name="Oppermann F.S."/>
            <person name="Korner R."/>
            <person name="Greff Z."/>
            <person name="Keri G."/>
            <person name="Stemmann O."/>
            <person name="Mann M."/>
        </authorList>
    </citation>
    <scope>IDENTIFICATION BY MASS SPECTROMETRY [LARGE SCALE ANALYSIS]</scope>
    <source>
        <tissue>Cervix carcinoma</tissue>
    </source>
</reference>
<reference key="10">
    <citation type="journal article" date="2008" name="Proc. Natl. Acad. Sci. U.S.A.">
        <title>A quantitative atlas of mitotic phosphorylation.</title>
        <authorList>
            <person name="Dephoure N."/>
            <person name="Zhou C."/>
            <person name="Villen J."/>
            <person name="Beausoleil S.A."/>
            <person name="Bakalarski C.E."/>
            <person name="Elledge S.J."/>
            <person name="Gygi S.P."/>
        </authorList>
    </citation>
    <scope>PHOSPHORYLATION [LARGE SCALE ANALYSIS] AT SER-52 AND SER-72</scope>
    <scope>IDENTIFICATION BY MASS SPECTROMETRY [LARGE SCALE ANALYSIS]</scope>
    <source>
        <tissue>Cervix carcinoma</tissue>
    </source>
</reference>
<reference key="11">
    <citation type="journal article" date="2009" name="Sci. Signal.">
        <title>Quantitative phosphoproteomic analysis of T cell receptor signaling reveals system-wide modulation of protein-protein interactions.</title>
        <authorList>
            <person name="Mayya V."/>
            <person name="Lundgren D.H."/>
            <person name="Hwang S.-I."/>
            <person name="Rezaul K."/>
            <person name="Wu L."/>
            <person name="Eng J.K."/>
            <person name="Rodionov V."/>
            <person name="Han D.K."/>
        </authorList>
    </citation>
    <scope>IDENTIFICATION BY MASS SPECTROMETRY [LARGE SCALE ANALYSIS]</scope>
    <source>
        <tissue>Leukemic T-cell</tissue>
    </source>
</reference>
<reference key="12">
    <citation type="journal article" date="2010" name="Sci. Signal.">
        <title>Quantitative phosphoproteomics reveals widespread full phosphorylation site occupancy during mitosis.</title>
        <authorList>
            <person name="Olsen J.V."/>
            <person name="Vermeulen M."/>
            <person name="Santamaria A."/>
            <person name="Kumar C."/>
            <person name="Miller M.L."/>
            <person name="Jensen L.J."/>
            <person name="Gnad F."/>
            <person name="Cox J."/>
            <person name="Jensen T.S."/>
            <person name="Nigg E.A."/>
            <person name="Brunak S."/>
            <person name="Mann M."/>
        </authorList>
    </citation>
    <scope>PHOSPHORYLATION [LARGE SCALE ANALYSIS] AT SER-52 AND SER-72</scope>
    <scope>IDENTIFICATION BY MASS SPECTROMETRY [LARGE SCALE ANALYSIS]</scope>
    <source>
        <tissue>Cervix carcinoma</tissue>
    </source>
</reference>
<reference key="13">
    <citation type="journal article" date="2011" name="BMC Syst. Biol.">
        <title>Initial characterization of the human central proteome.</title>
        <authorList>
            <person name="Burkard T.R."/>
            <person name="Planyavsky M."/>
            <person name="Kaupe I."/>
            <person name="Breitwieser F.P."/>
            <person name="Buerckstuemmer T."/>
            <person name="Bennett K.L."/>
            <person name="Superti-Furga G."/>
            <person name="Colinge J."/>
        </authorList>
    </citation>
    <scope>IDENTIFICATION BY MASS SPECTROMETRY [LARGE SCALE ANALYSIS]</scope>
</reference>
<reference key="14">
    <citation type="journal article" date="2011" name="Sci. Signal.">
        <title>System-wide temporal characterization of the proteome and phosphoproteome of human embryonic stem cell differentiation.</title>
        <authorList>
            <person name="Rigbolt K.T."/>
            <person name="Prokhorova T.A."/>
            <person name="Akimov V."/>
            <person name="Henningsen J."/>
            <person name="Johansen P.T."/>
            <person name="Kratchmarova I."/>
            <person name="Kassem M."/>
            <person name="Mann M."/>
            <person name="Olsen J.V."/>
            <person name="Blagoev B."/>
        </authorList>
    </citation>
    <scope>PHOSPHORYLATION [LARGE SCALE ANALYSIS] AT SER-72 AND SER-75</scope>
    <scope>IDENTIFICATION BY MASS SPECTROMETRY [LARGE SCALE ANALYSIS]</scope>
</reference>
<reference key="15">
    <citation type="journal article" date="2013" name="J. Proteome Res.">
        <title>Toward a comprehensive characterization of a human cancer cell phosphoproteome.</title>
        <authorList>
            <person name="Zhou H."/>
            <person name="Di Palma S."/>
            <person name="Preisinger C."/>
            <person name="Peng M."/>
            <person name="Polat A.N."/>
            <person name="Heck A.J."/>
            <person name="Mohammed S."/>
        </authorList>
    </citation>
    <scope>PHOSPHORYLATION [LARGE SCALE ANALYSIS] AT THR-49; SER-52; SER-66; SER-72; SER-75; SER-80; SER-430 AND SER-767</scope>
    <scope>IDENTIFICATION BY MASS SPECTROMETRY [LARGE SCALE ANALYSIS]</scope>
    <source>
        <tissue>Cervix carcinoma</tissue>
        <tissue>Erythroleukemia</tissue>
    </source>
</reference>
<reference key="16">
    <citation type="journal article" date="2014" name="J. Proteomics">
        <title>An enzyme assisted RP-RPLC approach for in-depth analysis of human liver phosphoproteome.</title>
        <authorList>
            <person name="Bian Y."/>
            <person name="Song C."/>
            <person name="Cheng K."/>
            <person name="Dong M."/>
            <person name="Wang F."/>
            <person name="Huang J."/>
            <person name="Sun D."/>
            <person name="Wang L."/>
            <person name="Ye M."/>
            <person name="Zou H."/>
        </authorList>
    </citation>
    <scope>PHOSPHORYLATION [LARGE SCALE ANALYSIS] AT SER-80</scope>
    <scope>IDENTIFICATION BY MASS SPECTROMETRY [LARGE SCALE ANALYSIS]</scope>
    <source>
        <tissue>Liver</tissue>
    </source>
</reference>
<reference key="17">
    <citation type="journal article" date="2016" name="Nat. Genet.">
        <title>Mutations in nuclear pore genes NUP93, NUP205 and XPO5 cause steroid-resistant nephrotic syndrome.</title>
        <authorList>
            <person name="Braun D.A."/>
            <person name="Sadowski C.E."/>
            <person name="Kohl S."/>
            <person name="Lovric S."/>
            <person name="Astrinidis S.A."/>
            <person name="Pabst W.L."/>
            <person name="Gee H.Y."/>
            <person name="Ashraf S."/>
            <person name="Lawson J.A."/>
            <person name="Shril S."/>
            <person name="Airik M."/>
            <person name="Tan W."/>
            <person name="Schapiro D."/>
            <person name="Rao J."/>
            <person name="Choi W.I."/>
            <person name="Hermle T."/>
            <person name="Kemper M.J."/>
            <person name="Pohl M."/>
            <person name="Ozaltin F."/>
            <person name="Konrad M."/>
            <person name="Bogdanovic R."/>
            <person name="Buescher R."/>
            <person name="Helmchen U."/>
            <person name="Serdaroglu E."/>
            <person name="Lifton R.P."/>
            <person name="Antonin W."/>
            <person name="Hildebrandt F."/>
        </authorList>
    </citation>
    <scope>INVOLVEMENT IN NPHS12</scope>
    <scope>VARIANTS NPHS12 TRP-388; VAL-591 AND CYS-629</scope>
    <scope>CHARACTERIZATION OF VARIANTS NPHS12 TRP-388; VAL-591 AND CYS-629</scope>
    <scope>INTERACTION WITH IPO7; SMAD4 AND NUP205</scope>
    <scope>SUBCELLULAR LOCATION</scope>
    <scope>FUNCTION</scope>
</reference>
<reference key="18">
    <citation type="journal article" date="2019" name="Biochem. Cell Biol.">
        <title>SARS coronavirus protein nsp1 disrupts localization of Nup93 from the nuclear pore complex.</title>
        <authorList>
            <person name="Gomez G.N."/>
            <person name="Abrar F."/>
            <person name="Dodhia M.P."/>
            <person name="Gonzalez F.G."/>
            <person name="Nag A."/>
        </authorList>
    </citation>
    <scope>INTERACTION WITH HUMAN SARS-COV TRANSLATION INHIBITOR NSP1 (MICROBIAL INFECTION)</scope>
</reference>
<organism>
    <name type="scientific">Homo sapiens</name>
    <name type="common">Human</name>
    <dbReference type="NCBI Taxonomy" id="9606"/>
    <lineage>
        <taxon>Eukaryota</taxon>
        <taxon>Metazoa</taxon>
        <taxon>Chordata</taxon>
        <taxon>Craniata</taxon>
        <taxon>Vertebrata</taxon>
        <taxon>Euteleostomi</taxon>
        <taxon>Mammalia</taxon>
        <taxon>Eutheria</taxon>
        <taxon>Euarchontoglires</taxon>
        <taxon>Primates</taxon>
        <taxon>Haplorrhini</taxon>
        <taxon>Catarrhini</taxon>
        <taxon>Hominidae</taxon>
        <taxon>Homo</taxon>
    </lineage>
</organism>
<protein>
    <recommendedName>
        <fullName>Nuclear pore complex protein Nup93</fullName>
    </recommendedName>
    <alternativeName>
        <fullName>93 kDa nucleoporin</fullName>
    </alternativeName>
    <alternativeName>
        <fullName>Nucleoporin Nup93</fullName>
    </alternativeName>
</protein>
<name>NUP93_HUMAN</name>
<keyword id="KW-0002">3D-structure</keyword>
<keyword id="KW-0025">Alternative splicing</keyword>
<keyword id="KW-0225">Disease variant</keyword>
<keyword id="KW-0472">Membrane</keyword>
<keyword id="KW-0509">mRNA transport</keyword>
<keyword id="KW-0906">Nuclear pore complex</keyword>
<keyword id="KW-0539">Nucleus</keyword>
<keyword id="KW-0597">Phosphoprotein</keyword>
<keyword id="KW-0653">Protein transport</keyword>
<keyword id="KW-1267">Proteomics identification</keyword>
<keyword id="KW-1185">Reference proteome</keyword>
<keyword id="KW-0811">Translocation</keyword>
<keyword id="KW-0813">Transport</keyword>
<dbReference type="EMBL" id="D42085">
    <property type="protein sequence ID" value="BAA07680.2"/>
    <property type="status" value="ALT_INIT"/>
    <property type="molecule type" value="mRNA"/>
</dbReference>
<dbReference type="EMBL" id="AK294176">
    <property type="protein sequence ID" value="BAH11689.1"/>
    <property type="molecule type" value="mRNA"/>
</dbReference>
<dbReference type="EMBL" id="BC034346">
    <property type="protein sequence ID" value="AAH34346.1"/>
    <property type="molecule type" value="mRNA"/>
</dbReference>
<dbReference type="EMBL" id="AC012181">
    <property type="status" value="NOT_ANNOTATED_CDS"/>
    <property type="molecule type" value="Genomic_DNA"/>
</dbReference>
<dbReference type="EMBL" id="AC106779">
    <property type="status" value="NOT_ANNOTATED_CDS"/>
    <property type="molecule type" value="Genomic_DNA"/>
</dbReference>
<dbReference type="EMBL" id="AC127456">
    <property type="status" value="NOT_ANNOTATED_CDS"/>
    <property type="molecule type" value="Genomic_DNA"/>
</dbReference>
<dbReference type="EMBL" id="AK056637">
    <property type="protein sequence ID" value="BAG51770.1"/>
    <property type="molecule type" value="mRNA"/>
</dbReference>
<dbReference type="CCDS" id="CCDS10769.1">
    <molecule id="Q8N1F7-1"/>
</dbReference>
<dbReference type="CCDS" id="CCDS55996.1">
    <molecule id="Q8N1F7-2"/>
</dbReference>
<dbReference type="RefSeq" id="NP_001229724.1">
    <molecule id="Q8N1F7-2"/>
    <property type="nucleotide sequence ID" value="NM_001242795.2"/>
</dbReference>
<dbReference type="RefSeq" id="NP_001229725.1">
    <molecule id="Q8N1F7-2"/>
    <property type="nucleotide sequence ID" value="NM_001242796.2"/>
</dbReference>
<dbReference type="RefSeq" id="NP_055484.3">
    <molecule id="Q8N1F7-1"/>
    <property type="nucleotide sequence ID" value="NM_014669.4"/>
</dbReference>
<dbReference type="RefSeq" id="XP_005256320.1">
    <molecule id="Q8N1F7-1"/>
    <property type="nucleotide sequence ID" value="XM_005256263.4"/>
</dbReference>
<dbReference type="RefSeq" id="XP_054170460.1">
    <molecule id="Q8N1F7-1"/>
    <property type="nucleotide sequence ID" value="XM_054314485.1"/>
</dbReference>
<dbReference type="PDB" id="5IJN">
    <property type="method" value="EM"/>
    <property type="resolution" value="21.40 A"/>
    <property type="chains" value="C/I/O/U=1-819"/>
</dbReference>
<dbReference type="PDB" id="5IJO">
    <property type="method" value="EM"/>
    <property type="resolution" value="21.40 A"/>
    <property type="chains" value="C/I/O/U=1-819"/>
</dbReference>
<dbReference type="PDB" id="7MW0">
    <property type="method" value="X-ray"/>
    <property type="resolution" value="2.00 A"/>
    <property type="chains" value="A=174-819"/>
</dbReference>
<dbReference type="PDB" id="7MW1">
    <property type="method" value="X-ray"/>
    <property type="resolution" value="3.40 A"/>
    <property type="chains" value="A/B=174-819"/>
</dbReference>
<dbReference type="PDB" id="7PER">
    <property type="method" value="EM"/>
    <property type="resolution" value="35.00 A"/>
    <property type="chains" value="C/I/O/U=1-819"/>
</dbReference>
<dbReference type="PDB" id="7R5J">
    <property type="method" value="EM"/>
    <property type="resolution" value="50.00 A"/>
    <property type="chains" value="A0/A1/A2/A3/A4/A5/A6=1-819"/>
</dbReference>
<dbReference type="PDB" id="7R5K">
    <property type="method" value="EM"/>
    <property type="resolution" value="12.00 A"/>
    <property type="chains" value="A0/A1/A2/A3/A4/A5/A6=1-819"/>
</dbReference>
<dbReference type="PDBsum" id="5IJN"/>
<dbReference type="PDBsum" id="5IJO"/>
<dbReference type="PDBsum" id="7MW0"/>
<dbReference type="PDBsum" id="7MW1"/>
<dbReference type="PDBsum" id="7PER"/>
<dbReference type="PDBsum" id="7R5J"/>
<dbReference type="PDBsum" id="7R5K"/>
<dbReference type="EMDB" id="EMD-14321"/>
<dbReference type="EMDB" id="EMD-14322"/>
<dbReference type="SMR" id="Q8N1F7"/>
<dbReference type="BioGRID" id="115041">
    <property type="interactions" value="283"/>
</dbReference>
<dbReference type="ComplexPortal" id="CPX-873">
    <property type="entry name" value="Nuclear pore complex"/>
</dbReference>
<dbReference type="CORUM" id="Q8N1F7"/>
<dbReference type="DIP" id="DIP-44020N"/>
<dbReference type="FunCoup" id="Q8N1F7">
    <property type="interactions" value="4661"/>
</dbReference>
<dbReference type="IntAct" id="Q8N1F7">
    <property type="interactions" value="115"/>
</dbReference>
<dbReference type="MINT" id="Q8N1F7"/>
<dbReference type="STRING" id="9606.ENSP00000310668"/>
<dbReference type="TCDB" id="1.I.1.1.3">
    <property type="family name" value="the nuclear pore complex (npc) family"/>
</dbReference>
<dbReference type="GlyCosmos" id="Q8N1F7">
    <property type="glycosylation" value="3 sites, 1 glycan"/>
</dbReference>
<dbReference type="GlyGen" id="Q8N1F7">
    <property type="glycosylation" value="7 sites, 1 N-linked glycan (1 site), 1 O-linked glycan (6 sites)"/>
</dbReference>
<dbReference type="iPTMnet" id="Q8N1F7"/>
<dbReference type="MetOSite" id="Q8N1F7"/>
<dbReference type="PhosphoSitePlus" id="Q8N1F7"/>
<dbReference type="SwissPalm" id="Q8N1F7"/>
<dbReference type="BioMuta" id="NUP93"/>
<dbReference type="DMDM" id="116242684"/>
<dbReference type="jPOST" id="Q8N1F7"/>
<dbReference type="MassIVE" id="Q8N1F7"/>
<dbReference type="PaxDb" id="9606-ENSP00000310668"/>
<dbReference type="PeptideAtlas" id="Q8N1F7"/>
<dbReference type="ProteomicsDB" id="71593">
    <molecule id="Q8N1F7-1"/>
</dbReference>
<dbReference type="ProteomicsDB" id="71594">
    <molecule id="Q8N1F7-2"/>
</dbReference>
<dbReference type="Pumba" id="Q8N1F7"/>
<dbReference type="Antibodypedia" id="14851">
    <property type="antibodies" value="136 antibodies from 28 providers"/>
</dbReference>
<dbReference type="DNASU" id="9688"/>
<dbReference type="Ensembl" id="ENST00000308159.10">
    <molecule id="Q8N1F7-1"/>
    <property type="protein sequence ID" value="ENSP00000310668.5"/>
    <property type="gene ID" value="ENSG00000102900.13"/>
</dbReference>
<dbReference type="Ensembl" id="ENST00000542526.5">
    <molecule id="Q8N1F7-2"/>
    <property type="protein sequence ID" value="ENSP00000440235.1"/>
    <property type="gene ID" value="ENSG00000102900.13"/>
</dbReference>
<dbReference type="Ensembl" id="ENST00000564887.5">
    <molecule id="Q8N1F7-2"/>
    <property type="protein sequence ID" value="ENSP00000458039.1"/>
    <property type="gene ID" value="ENSG00000102900.13"/>
</dbReference>
<dbReference type="GeneID" id="9688"/>
<dbReference type="KEGG" id="hsa:9688"/>
<dbReference type="MANE-Select" id="ENST00000308159.10">
    <property type="protein sequence ID" value="ENSP00000310668.5"/>
    <property type="RefSeq nucleotide sequence ID" value="NM_014669.5"/>
    <property type="RefSeq protein sequence ID" value="NP_055484.3"/>
</dbReference>
<dbReference type="UCSC" id="uc002eka.4">
    <molecule id="Q8N1F7-1"/>
    <property type="organism name" value="human"/>
</dbReference>
<dbReference type="AGR" id="HGNC:28958"/>
<dbReference type="CTD" id="9688"/>
<dbReference type="DisGeNET" id="9688"/>
<dbReference type="GeneCards" id="NUP93"/>
<dbReference type="HGNC" id="HGNC:28958">
    <property type="gene designation" value="NUP93"/>
</dbReference>
<dbReference type="HPA" id="ENSG00000102900">
    <property type="expression patterns" value="Low tissue specificity"/>
</dbReference>
<dbReference type="MalaCards" id="NUP93"/>
<dbReference type="MIM" id="614351">
    <property type="type" value="gene"/>
</dbReference>
<dbReference type="MIM" id="616892">
    <property type="type" value="phenotype"/>
</dbReference>
<dbReference type="neXtProt" id="NX_Q8N1F7"/>
<dbReference type="OpenTargets" id="ENSG00000102900"/>
<dbReference type="Orphanet" id="656">
    <property type="disease" value="Hereditary steroid-resistant nephrotic syndrome"/>
</dbReference>
<dbReference type="PharmGKB" id="PA134912759"/>
<dbReference type="VEuPathDB" id="HostDB:ENSG00000102900"/>
<dbReference type="eggNOG" id="KOG2168">
    <property type="taxonomic scope" value="Eukaryota"/>
</dbReference>
<dbReference type="GeneTree" id="ENSGT00390000016353"/>
<dbReference type="HOGENOM" id="CLU_011846_1_0_1"/>
<dbReference type="InParanoid" id="Q8N1F7"/>
<dbReference type="OMA" id="LLMCGQF"/>
<dbReference type="OrthoDB" id="1918363at2759"/>
<dbReference type="PAN-GO" id="Q8N1F7">
    <property type="GO annotations" value="4 GO annotations based on evolutionary models"/>
</dbReference>
<dbReference type="PhylomeDB" id="Q8N1F7"/>
<dbReference type="TreeFam" id="TF315118"/>
<dbReference type="PathwayCommons" id="Q8N1F7"/>
<dbReference type="Reactome" id="R-HSA-1169408">
    <property type="pathway name" value="ISG15 antiviral mechanism"/>
</dbReference>
<dbReference type="Reactome" id="R-HSA-159227">
    <property type="pathway name" value="Transport of the SLBP independent Mature mRNA"/>
</dbReference>
<dbReference type="Reactome" id="R-HSA-159230">
    <property type="pathway name" value="Transport of the SLBP Dependant Mature mRNA"/>
</dbReference>
<dbReference type="Reactome" id="R-HSA-159231">
    <property type="pathway name" value="Transport of Mature mRNA Derived from an Intronless Transcript"/>
</dbReference>
<dbReference type="Reactome" id="R-HSA-159236">
    <property type="pathway name" value="Transport of Mature mRNA derived from an Intron-Containing Transcript"/>
</dbReference>
<dbReference type="Reactome" id="R-HSA-165054">
    <property type="pathway name" value="Rev-mediated nuclear export of HIV RNA"/>
</dbReference>
<dbReference type="Reactome" id="R-HSA-168271">
    <property type="pathway name" value="Transport of Ribonucleoproteins into the Host Nucleus"/>
</dbReference>
<dbReference type="Reactome" id="R-HSA-168276">
    <property type="pathway name" value="NS1 Mediated Effects on Host Pathways"/>
</dbReference>
<dbReference type="Reactome" id="R-HSA-168325">
    <property type="pathway name" value="Viral Messenger RNA Synthesis"/>
</dbReference>
<dbReference type="Reactome" id="R-HSA-168333">
    <property type="pathway name" value="NEP/NS2 Interacts with the Cellular Export Machinery"/>
</dbReference>
<dbReference type="Reactome" id="R-HSA-170822">
    <property type="pathway name" value="Regulation of Glucokinase by Glucokinase Regulatory Protein"/>
</dbReference>
<dbReference type="Reactome" id="R-HSA-180746">
    <property type="pathway name" value="Nuclear import of Rev protein"/>
</dbReference>
<dbReference type="Reactome" id="R-HSA-180910">
    <property type="pathway name" value="Vpr-mediated nuclear import of PICs"/>
</dbReference>
<dbReference type="Reactome" id="R-HSA-191859">
    <property type="pathway name" value="snRNP Assembly"/>
</dbReference>
<dbReference type="Reactome" id="R-HSA-3108214">
    <property type="pathway name" value="SUMOylation of DNA damage response and repair proteins"/>
</dbReference>
<dbReference type="Reactome" id="R-HSA-3232142">
    <property type="pathway name" value="SUMOylation of ubiquitinylation proteins"/>
</dbReference>
<dbReference type="Reactome" id="R-HSA-3301854">
    <property type="pathway name" value="Nuclear Pore Complex (NPC) Disassembly"/>
</dbReference>
<dbReference type="Reactome" id="R-HSA-3371453">
    <property type="pathway name" value="Regulation of HSF1-mediated heat shock response"/>
</dbReference>
<dbReference type="Reactome" id="R-HSA-4085377">
    <property type="pathway name" value="SUMOylation of SUMOylation proteins"/>
</dbReference>
<dbReference type="Reactome" id="R-HSA-4551638">
    <property type="pathway name" value="SUMOylation of chromatin organization proteins"/>
</dbReference>
<dbReference type="Reactome" id="R-HSA-4570464">
    <property type="pathway name" value="SUMOylation of RNA binding proteins"/>
</dbReference>
<dbReference type="Reactome" id="R-HSA-4615885">
    <property type="pathway name" value="SUMOylation of DNA replication proteins"/>
</dbReference>
<dbReference type="Reactome" id="R-HSA-5578749">
    <property type="pathway name" value="Transcriptional regulation by small RNAs"/>
</dbReference>
<dbReference type="Reactome" id="R-HSA-5619107">
    <property type="pathway name" value="Defective TPR may confer susceptibility towards thyroid papillary carcinoma (TPC)"/>
</dbReference>
<dbReference type="Reactome" id="R-HSA-6784531">
    <property type="pathway name" value="tRNA processing in the nucleus"/>
</dbReference>
<dbReference type="Reactome" id="R-HSA-9609690">
    <property type="pathway name" value="HCMV Early Events"/>
</dbReference>
<dbReference type="Reactome" id="R-HSA-9610379">
    <property type="pathway name" value="HCMV Late Events"/>
</dbReference>
<dbReference type="Reactome" id="R-HSA-9615933">
    <property type="pathway name" value="Postmitotic nuclear pore complex (NPC) reformation"/>
</dbReference>
<dbReference type="Reactome" id="R-HSA-9705671">
    <property type="pathway name" value="SARS-CoV-2 activates/modulates innate and adaptive immune responses"/>
</dbReference>
<dbReference type="SignaLink" id="Q8N1F7"/>
<dbReference type="SIGNOR" id="Q8N1F7"/>
<dbReference type="BioGRID-ORCS" id="9688">
    <property type="hits" value="771 hits in 1168 CRISPR screens"/>
</dbReference>
<dbReference type="CD-CODE" id="D6A53B8E">
    <property type="entry name" value="Nuclear pore complex"/>
</dbReference>
<dbReference type="ChiTaRS" id="NUP93">
    <property type="organism name" value="human"/>
</dbReference>
<dbReference type="GeneWiki" id="NUP93"/>
<dbReference type="GenomeRNAi" id="9688"/>
<dbReference type="Pharos" id="Q8N1F7">
    <property type="development level" value="Tbio"/>
</dbReference>
<dbReference type="PRO" id="PR:Q8N1F7"/>
<dbReference type="Proteomes" id="UP000005640">
    <property type="component" value="Chromosome 16"/>
</dbReference>
<dbReference type="RNAct" id="Q8N1F7">
    <property type="molecule type" value="protein"/>
</dbReference>
<dbReference type="Bgee" id="ENSG00000102900">
    <property type="expression patterns" value="Expressed in ventricular zone and 191 other cell types or tissues"/>
</dbReference>
<dbReference type="ExpressionAtlas" id="Q8N1F7">
    <property type="expression patterns" value="baseline and differential"/>
</dbReference>
<dbReference type="GO" id="GO:0005813">
    <property type="term" value="C:centrosome"/>
    <property type="evidence" value="ECO:0007669"/>
    <property type="project" value="Ensembl"/>
</dbReference>
<dbReference type="GO" id="GO:0005829">
    <property type="term" value="C:cytosol"/>
    <property type="evidence" value="ECO:0000304"/>
    <property type="project" value="Reactome"/>
</dbReference>
<dbReference type="GO" id="GO:0016020">
    <property type="term" value="C:membrane"/>
    <property type="evidence" value="ECO:0007005"/>
    <property type="project" value="UniProtKB"/>
</dbReference>
<dbReference type="GO" id="GO:0005635">
    <property type="term" value="C:nuclear envelope"/>
    <property type="evidence" value="ECO:0000314"/>
    <property type="project" value="UniProtKB"/>
</dbReference>
<dbReference type="GO" id="GO:0031965">
    <property type="term" value="C:nuclear membrane"/>
    <property type="evidence" value="ECO:0000314"/>
    <property type="project" value="UniProtKB"/>
</dbReference>
<dbReference type="GO" id="GO:0034399">
    <property type="term" value="C:nuclear periphery"/>
    <property type="evidence" value="ECO:0000314"/>
    <property type="project" value="UniProtKB"/>
</dbReference>
<dbReference type="GO" id="GO:0005643">
    <property type="term" value="C:nuclear pore"/>
    <property type="evidence" value="ECO:0000314"/>
    <property type="project" value="UniProtKB"/>
</dbReference>
<dbReference type="GO" id="GO:0017056">
    <property type="term" value="F:structural constituent of nuclear pore"/>
    <property type="evidence" value="ECO:0000315"/>
    <property type="project" value="UniProtKB"/>
</dbReference>
<dbReference type="GO" id="GO:0006998">
    <property type="term" value="P:nuclear envelope organization"/>
    <property type="evidence" value="ECO:0000314"/>
    <property type="project" value="UniProtKB"/>
</dbReference>
<dbReference type="GO" id="GO:0051292">
    <property type="term" value="P:nuclear pore complex assembly"/>
    <property type="evidence" value="ECO:0000314"/>
    <property type="project" value="UniProtKB"/>
</dbReference>
<dbReference type="GO" id="GO:0006913">
    <property type="term" value="P:nucleocytoplasmic transport"/>
    <property type="evidence" value="ECO:0000303"/>
    <property type="project" value="ComplexPortal"/>
</dbReference>
<dbReference type="GO" id="GO:0016973">
    <property type="term" value="P:poly(A)+ mRNA export from nucleus"/>
    <property type="evidence" value="ECO:0000318"/>
    <property type="project" value="GO_Central"/>
</dbReference>
<dbReference type="GO" id="GO:0060391">
    <property type="term" value="P:positive regulation of SMAD protein signal transduction"/>
    <property type="evidence" value="ECO:0000314"/>
    <property type="project" value="UniProtKB"/>
</dbReference>
<dbReference type="GO" id="GO:0006606">
    <property type="term" value="P:protein import into nucleus"/>
    <property type="evidence" value="ECO:0000318"/>
    <property type="project" value="GO_Central"/>
</dbReference>
<dbReference type="InterPro" id="IPR007231">
    <property type="entry name" value="Nucleoporin_int_Nup93/Nic96"/>
</dbReference>
<dbReference type="PANTHER" id="PTHR11225:SF4">
    <property type="entry name" value="NUCLEAR PORE COMPLEX PROTEIN NUP93"/>
    <property type="match status" value="1"/>
</dbReference>
<dbReference type="PANTHER" id="PTHR11225">
    <property type="entry name" value="NUCLEAR PORE COMPLEX PROTEIN NUP93 NUCLEOPORIN NUP93 DEAD EYE PROTEIN"/>
    <property type="match status" value="1"/>
</dbReference>
<dbReference type="Pfam" id="PF04097">
    <property type="entry name" value="Nic96"/>
    <property type="match status" value="1"/>
</dbReference>
<accession>Q8N1F7</accession>
<accession>B3KPQ8</accession>
<accession>Q14705</accession>
<evidence type="ECO:0000250" key="1">
    <source>
        <dbReference type="UniProtKB" id="Q66HC5"/>
    </source>
</evidence>
<evidence type="ECO:0000269" key="2">
    <source>
    </source>
</evidence>
<evidence type="ECO:0000269" key="3">
    <source>
    </source>
</evidence>
<evidence type="ECO:0000269" key="4">
    <source>
    </source>
</evidence>
<evidence type="ECO:0000269" key="5">
    <source>
    </source>
</evidence>
<evidence type="ECO:0000269" key="6">
    <source>
    </source>
</evidence>
<evidence type="ECO:0000269" key="7">
    <source>
    </source>
</evidence>
<evidence type="ECO:0000269" key="8">
    <source>
    </source>
</evidence>
<evidence type="ECO:0000303" key="9">
    <source>
    </source>
</evidence>
<evidence type="ECO:0000305" key="10"/>
<evidence type="ECO:0007744" key="11">
    <source>
    </source>
</evidence>
<evidence type="ECO:0007744" key="12">
    <source>
    </source>
</evidence>
<evidence type="ECO:0007744" key="13">
    <source>
    </source>
</evidence>
<evidence type="ECO:0007744" key="14">
    <source>
    </source>
</evidence>
<evidence type="ECO:0007744" key="15">
    <source>
    </source>
</evidence>
<evidence type="ECO:0007829" key="16">
    <source>
        <dbReference type="PDB" id="7MW0"/>
    </source>
</evidence>
<evidence type="ECO:0007829" key="17">
    <source>
        <dbReference type="PDB" id="7MW1"/>
    </source>
</evidence>
<sequence>MDTEGFGELLQQAEQLAAETEGISELPHVERNLQEIQQAGERLRSRTLTRTSQETADVKASVLLGSRGLDISHISQRLESLSAATTFEPLEPVKDTDIQGFLKNEKDNALLSAIEESRKRTFGMAEEYHRESMLVEWEQVKQRILHTLLASGEDALDFTQESEPSYISDVGPPGRSSLDNIEMAYARQIYIYNEKIVNGHLQPNLVDLCASVAELDDKSISDMWTMVKQMTDVLLTPATDALKNRSSVEVRMEFVRQALAYLEQSYKNYTLVTVFGNLHQAQLGGVPGTYQLVRSFLNIKLPAPLPGLQDGEVEGHPVWALIYYCMRCGDLLAASQVVNRAQHQLGEFKTWFQEYMNSKDRRLSPATENKLRLHYRRALRNNTDPYKRAVYCIIGRCDVTDNQSEVADKTEDYLWLKLNQVCFDDDGTSSPQDRLTLSQFQKQLLEDYGESHFTVNQQPFLYFQVLFLTAQFEAAVAFLFRMERLRCHAVHVALVLFELKLLLKSSGQSAQLLSHEPGDPPCLRRLNFVRLLMLYTRKFESTDPREALQYFYFLRDEKDSQGENMFLRCVSELVIESREFDMILGKLENDGSRKPGVIDKFTSDTKPIINKVASVAENKGLFEEAAKLYDLAKNADKVLELMNKLLSPVVPQISAPQSNKERLKNMALSIAERYRAQGISANKFVDSTFYLLLDLITFFDEYHSGHIDRAFDIIERLKLVPLNQESVEERVAAFRNFSDEIRHNLSEVLLATMNILFTQFKRLKGTSPSSSSRPQRVIEDRDSQLRSQARTLITFAGMIPYRTSGDTNARLVQMEVLMN</sequence>